<proteinExistence type="evidence at protein level"/>
<comment type="function">
    <text>Probably participates in a plant defense mechanism.</text>
</comment>
<comment type="tissue specificity">
    <text evidence="3">Expressed in petals and roots but not in leaves, petioles and runners (at protein level).</text>
</comment>
<comment type="domain">
    <text>The presence of a 'disulfide through disulfide knot' structurally defines this protein as a knottin.</text>
</comment>
<comment type="PTM">
    <text>This is a cyclic peptide.</text>
</comment>
<comment type="mass spectrometry"/>
<comment type="similarity">
    <text evidence="1">Belongs to the cyclotide family. Bracelet subfamily.</text>
</comment>
<comment type="caution">
    <text evidence="4">This peptide is cyclic. The start position was chosen by similarity to OAK1 (kalata-B1) for which the DNA sequence is known.</text>
</comment>
<accession>P58442</accession>
<evidence type="ECO:0000255" key="1">
    <source>
        <dbReference type="PROSITE-ProRule" id="PRU00395"/>
    </source>
</evidence>
<evidence type="ECO:0000269" key="2">
    <source>
    </source>
</evidence>
<evidence type="ECO:0000269" key="3">
    <source>
    </source>
</evidence>
<evidence type="ECO:0000305" key="4"/>
<protein>
    <recommendedName>
        <fullName>Cycloviolacin-O10</fullName>
    </recommendedName>
</protein>
<name>CYO10_VIOOD</name>
<feature type="peptide" id="PRO_0000043617" description="Cycloviolacin-O10">
    <location>
        <begin position="1"/>
        <end position="30"/>
    </location>
</feature>
<feature type="disulfide bond">
    <location>
        <begin position="4"/>
        <end position="20"/>
    </location>
</feature>
<feature type="disulfide bond">
    <location>
        <begin position="8"/>
        <end position="22"/>
    </location>
</feature>
<feature type="disulfide bond">
    <location>
        <begin position="13"/>
        <end position="27"/>
    </location>
</feature>
<feature type="cross-link" description="Cyclopeptide (Gly-Asn)">
    <location>
        <begin position="1"/>
        <end position="30"/>
    </location>
</feature>
<sequence>GIPCGESCVYIPCLTSAVGCSCKSKVCYRN</sequence>
<reference key="1">
    <citation type="journal article" date="1999" name="J. Mol. Biol.">
        <title>Plant cyclotides: a unique family of cyclic and knotted proteins that defines the cyclic cystine knot structural motif.</title>
        <authorList>
            <person name="Craik D.J."/>
            <person name="Daly N.L."/>
            <person name="Bond T."/>
            <person name="Waine C."/>
        </authorList>
    </citation>
    <scope>PROTEIN SEQUENCE</scope>
</reference>
<reference key="2">
    <citation type="journal article" date="2006" name="Biochem. J.">
        <title>A novel suite of cyclotides from Viola odorata: sequence variation and the implications for structure, function and stability.</title>
        <authorList>
            <person name="Ireland D.C."/>
            <person name="Colgrave M.L."/>
            <person name="Craik D.J."/>
        </authorList>
    </citation>
    <scope>PROTEIN SEQUENCE</scope>
    <scope>MASS SPECTROMETRY</scope>
</reference>
<reference key="3">
    <citation type="journal article" date="2017" name="J. Nat. Prod.">
        <title>Cyclotides from the Indian Medicinal Plant Viola odorata (Banafsha): Identification and Characterization.</title>
        <authorList>
            <person name="Narayani M."/>
            <person name="Chadha A."/>
            <person name="Srivastava S."/>
        </authorList>
    </citation>
    <scope>TISSUE SPECIFICITY</scope>
    <scope>IDENTIFICATION BY MASS SPECTROMETRY</scope>
</reference>
<keyword id="KW-0903">Direct protein sequencing</keyword>
<keyword id="KW-1015">Disulfide bond</keyword>
<keyword id="KW-0960">Knottin</keyword>
<keyword id="KW-0611">Plant defense</keyword>
<organism>
    <name type="scientific">Viola odorata</name>
    <name type="common">Sweet violet</name>
    <dbReference type="NCBI Taxonomy" id="97441"/>
    <lineage>
        <taxon>Eukaryota</taxon>
        <taxon>Viridiplantae</taxon>
        <taxon>Streptophyta</taxon>
        <taxon>Embryophyta</taxon>
        <taxon>Tracheophyta</taxon>
        <taxon>Spermatophyta</taxon>
        <taxon>Magnoliopsida</taxon>
        <taxon>eudicotyledons</taxon>
        <taxon>Gunneridae</taxon>
        <taxon>Pentapetalae</taxon>
        <taxon>rosids</taxon>
        <taxon>fabids</taxon>
        <taxon>Malpighiales</taxon>
        <taxon>Violaceae</taxon>
        <taxon>Viola</taxon>
        <taxon>Viola subgen. Viola</taxon>
        <taxon>Viola sect. Viola</taxon>
        <taxon>Viola subsect. Viola</taxon>
    </lineage>
</organism>
<dbReference type="SMR" id="P58442"/>
<dbReference type="GO" id="GO:0006952">
    <property type="term" value="P:defense response"/>
    <property type="evidence" value="ECO:0000250"/>
    <property type="project" value="UniProtKB"/>
</dbReference>
<dbReference type="InterPro" id="IPR005535">
    <property type="entry name" value="Cyclotide"/>
</dbReference>
<dbReference type="InterPro" id="IPR012323">
    <property type="entry name" value="Cyclotide_bracelet_CS"/>
</dbReference>
<dbReference type="InterPro" id="IPR036146">
    <property type="entry name" value="Cyclotide_sf"/>
</dbReference>
<dbReference type="Pfam" id="PF03784">
    <property type="entry name" value="Cyclotide"/>
    <property type="match status" value="1"/>
</dbReference>
<dbReference type="PIRSF" id="PIRSF037891">
    <property type="entry name" value="Cycloviolacin"/>
    <property type="match status" value="1"/>
</dbReference>
<dbReference type="SUPFAM" id="SSF57038">
    <property type="entry name" value="Cyclotides"/>
    <property type="match status" value="1"/>
</dbReference>
<dbReference type="PROSITE" id="PS51052">
    <property type="entry name" value="CYCLOTIDE"/>
    <property type="match status" value="1"/>
</dbReference>
<dbReference type="PROSITE" id="PS60008">
    <property type="entry name" value="CYCLOTIDE_BRACELET"/>
    <property type="match status" value="1"/>
</dbReference>